<feature type="chain" id="PRO_1000139262" description="Cyclic pyranopterin monophosphate synthase">
    <location>
        <begin position="1"/>
        <end position="161"/>
    </location>
</feature>
<feature type="active site" evidence="1">
    <location>
        <position position="128"/>
    </location>
</feature>
<feature type="binding site" evidence="1">
    <location>
        <begin position="75"/>
        <end position="77"/>
    </location>
    <ligand>
        <name>substrate</name>
    </ligand>
</feature>
<feature type="binding site" evidence="1">
    <location>
        <begin position="113"/>
        <end position="114"/>
    </location>
    <ligand>
        <name>substrate</name>
    </ligand>
</feature>
<reference key="1">
    <citation type="journal article" date="2009" name="PLoS Genet.">
        <title>Organised genome dynamics in the Escherichia coli species results in highly diverse adaptive paths.</title>
        <authorList>
            <person name="Touchon M."/>
            <person name="Hoede C."/>
            <person name="Tenaillon O."/>
            <person name="Barbe V."/>
            <person name="Baeriswyl S."/>
            <person name="Bidet P."/>
            <person name="Bingen E."/>
            <person name="Bonacorsi S."/>
            <person name="Bouchier C."/>
            <person name="Bouvet O."/>
            <person name="Calteau A."/>
            <person name="Chiapello H."/>
            <person name="Clermont O."/>
            <person name="Cruveiller S."/>
            <person name="Danchin A."/>
            <person name="Diard M."/>
            <person name="Dossat C."/>
            <person name="Karoui M.E."/>
            <person name="Frapy E."/>
            <person name="Garry L."/>
            <person name="Ghigo J.M."/>
            <person name="Gilles A.M."/>
            <person name="Johnson J."/>
            <person name="Le Bouguenec C."/>
            <person name="Lescat M."/>
            <person name="Mangenot S."/>
            <person name="Martinez-Jehanne V."/>
            <person name="Matic I."/>
            <person name="Nassif X."/>
            <person name="Oztas S."/>
            <person name="Petit M.A."/>
            <person name="Pichon C."/>
            <person name="Rouy Z."/>
            <person name="Ruf C.S."/>
            <person name="Schneider D."/>
            <person name="Tourret J."/>
            <person name="Vacherie B."/>
            <person name="Vallenet D."/>
            <person name="Medigue C."/>
            <person name="Rocha E.P.C."/>
            <person name="Denamur E."/>
        </authorList>
    </citation>
    <scope>NUCLEOTIDE SEQUENCE [LARGE SCALE GENOMIC DNA]</scope>
    <source>
        <strain>IAI39 / ExPEC</strain>
    </source>
</reference>
<sequence>MSQLTHINAAGEAHMVDVSAKAETVREARAEAFVTMRSETLAMIIDGRHHKGDVFATARIAGIQAAKRTWDLIPLCHPLMLSKVEVNLQAEPEHNRVRIETLCRLTGKTGVEMEALTAASVAALTIYDMCKAVQKDMVIGPVRLLAKSGGKSGDFKVEADD</sequence>
<comment type="function">
    <text evidence="1">Catalyzes the conversion of (8S)-3',8-cyclo-7,8-dihydroguanosine 5'-triphosphate to cyclic pyranopterin monophosphate (cPMP).</text>
</comment>
<comment type="catalytic activity">
    <reaction evidence="1">
        <text>(8S)-3',8-cyclo-7,8-dihydroguanosine 5'-triphosphate = cyclic pyranopterin phosphate + diphosphate</text>
        <dbReference type="Rhea" id="RHEA:49580"/>
        <dbReference type="ChEBI" id="CHEBI:33019"/>
        <dbReference type="ChEBI" id="CHEBI:59648"/>
        <dbReference type="ChEBI" id="CHEBI:131766"/>
        <dbReference type="EC" id="4.6.1.17"/>
    </reaction>
</comment>
<comment type="pathway">
    <text evidence="1">Cofactor biosynthesis; molybdopterin biosynthesis.</text>
</comment>
<comment type="subunit">
    <text evidence="1">Homohexamer; trimer of dimers.</text>
</comment>
<comment type="similarity">
    <text evidence="1">Belongs to the MoaC family.</text>
</comment>
<keyword id="KW-0456">Lyase</keyword>
<keyword id="KW-0501">Molybdenum cofactor biosynthesis</keyword>
<organism>
    <name type="scientific">Escherichia coli O7:K1 (strain IAI39 / ExPEC)</name>
    <dbReference type="NCBI Taxonomy" id="585057"/>
    <lineage>
        <taxon>Bacteria</taxon>
        <taxon>Pseudomonadati</taxon>
        <taxon>Pseudomonadota</taxon>
        <taxon>Gammaproteobacteria</taxon>
        <taxon>Enterobacterales</taxon>
        <taxon>Enterobacteriaceae</taxon>
        <taxon>Escherichia</taxon>
    </lineage>
</organism>
<evidence type="ECO:0000255" key="1">
    <source>
        <dbReference type="HAMAP-Rule" id="MF_01224"/>
    </source>
</evidence>
<dbReference type="EC" id="4.6.1.17" evidence="1"/>
<dbReference type="EMBL" id="CU928164">
    <property type="protein sequence ID" value="CAR16896.1"/>
    <property type="molecule type" value="Genomic_DNA"/>
</dbReference>
<dbReference type="RefSeq" id="WP_000080885.1">
    <property type="nucleotide sequence ID" value="NC_011750.1"/>
</dbReference>
<dbReference type="RefSeq" id="YP_002406784.1">
    <property type="nucleotide sequence ID" value="NC_011750.1"/>
</dbReference>
<dbReference type="SMR" id="B7NNL3"/>
<dbReference type="STRING" id="585057.ECIAI39_0759"/>
<dbReference type="GeneID" id="86945666"/>
<dbReference type="KEGG" id="ect:ECIAI39_0759"/>
<dbReference type="PATRIC" id="fig|585057.6.peg.802"/>
<dbReference type="HOGENOM" id="CLU_074693_1_1_6"/>
<dbReference type="UniPathway" id="UPA00344"/>
<dbReference type="Proteomes" id="UP000000749">
    <property type="component" value="Chromosome"/>
</dbReference>
<dbReference type="GO" id="GO:0061799">
    <property type="term" value="F:cyclic pyranopterin monophosphate synthase activity"/>
    <property type="evidence" value="ECO:0007669"/>
    <property type="project" value="UniProtKB-UniRule"/>
</dbReference>
<dbReference type="GO" id="GO:0006777">
    <property type="term" value="P:Mo-molybdopterin cofactor biosynthetic process"/>
    <property type="evidence" value="ECO:0007669"/>
    <property type="project" value="UniProtKB-UniRule"/>
</dbReference>
<dbReference type="CDD" id="cd01420">
    <property type="entry name" value="MoaC_PE"/>
    <property type="match status" value="1"/>
</dbReference>
<dbReference type="FunFam" id="3.30.70.640:FF:000001">
    <property type="entry name" value="Cyclic pyranopterin monophosphate synthase"/>
    <property type="match status" value="1"/>
</dbReference>
<dbReference type="Gene3D" id="3.30.70.640">
    <property type="entry name" value="Molybdopterin cofactor biosynthesis C (MoaC) domain"/>
    <property type="match status" value="1"/>
</dbReference>
<dbReference type="HAMAP" id="MF_01224_B">
    <property type="entry name" value="MoaC_B"/>
    <property type="match status" value="1"/>
</dbReference>
<dbReference type="InterPro" id="IPR023045">
    <property type="entry name" value="MoaC"/>
</dbReference>
<dbReference type="InterPro" id="IPR047594">
    <property type="entry name" value="MoaC_bact/euk"/>
</dbReference>
<dbReference type="InterPro" id="IPR036522">
    <property type="entry name" value="MoaC_sf"/>
</dbReference>
<dbReference type="InterPro" id="IPR050105">
    <property type="entry name" value="MoCo_biosynth_MoaA/MoaC"/>
</dbReference>
<dbReference type="InterPro" id="IPR002820">
    <property type="entry name" value="Mopterin_CF_biosynth-C_dom"/>
</dbReference>
<dbReference type="NCBIfam" id="TIGR00581">
    <property type="entry name" value="moaC"/>
    <property type="match status" value="1"/>
</dbReference>
<dbReference type="NCBIfam" id="NF006870">
    <property type="entry name" value="PRK09364.1"/>
    <property type="match status" value="1"/>
</dbReference>
<dbReference type="PANTHER" id="PTHR22960">
    <property type="entry name" value="MOLYBDOPTERIN COFACTOR SYNTHESIS PROTEIN A"/>
    <property type="match status" value="1"/>
</dbReference>
<dbReference type="Pfam" id="PF01967">
    <property type="entry name" value="MoaC"/>
    <property type="match status" value="1"/>
</dbReference>
<dbReference type="SUPFAM" id="SSF55040">
    <property type="entry name" value="Molybdenum cofactor biosynthesis protein C, MoaC"/>
    <property type="match status" value="1"/>
</dbReference>
<protein>
    <recommendedName>
        <fullName evidence="1">Cyclic pyranopterin monophosphate synthase</fullName>
        <ecNumber evidence="1">4.6.1.17</ecNumber>
    </recommendedName>
    <alternativeName>
        <fullName evidence="1">Molybdenum cofactor biosynthesis protein C</fullName>
    </alternativeName>
</protein>
<gene>
    <name evidence="1" type="primary">moaC</name>
    <name type="ordered locus">ECIAI39_0759</name>
</gene>
<accession>B7NNL3</accession>
<proteinExistence type="inferred from homology"/>
<name>MOAC_ECO7I</name>